<evidence type="ECO:0000255" key="1">
    <source>
        <dbReference type="HAMAP-Rule" id="MF_01331"/>
    </source>
</evidence>
<evidence type="ECO:0000305" key="2"/>
<accession>B2K5M5</accession>
<name>RL22_YERPB</name>
<comment type="function">
    <text evidence="1">This protein binds specifically to 23S rRNA; its binding is stimulated by other ribosomal proteins, e.g. L4, L17, and L20. It is important during the early stages of 50S assembly. It makes multiple contacts with different domains of the 23S rRNA in the assembled 50S subunit and ribosome (By similarity).</text>
</comment>
<comment type="function">
    <text evidence="1">The globular domain of the protein is located near the polypeptide exit tunnel on the outside of the subunit, while an extended beta-hairpin is found that lines the wall of the exit tunnel in the center of the 70S ribosome.</text>
</comment>
<comment type="subunit">
    <text evidence="1">Part of the 50S ribosomal subunit.</text>
</comment>
<comment type="similarity">
    <text evidence="1">Belongs to the universal ribosomal protein uL22 family.</text>
</comment>
<dbReference type="EMBL" id="CP001048">
    <property type="protein sequence ID" value="ACC90834.1"/>
    <property type="molecule type" value="Genomic_DNA"/>
</dbReference>
<dbReference type="RefSeq" id="WP_002223844.1">
    <property type="nucleotide sequence ID" value="NZ_CP009780.1"/>
</dbReference>
<dbReference type="SMR" id="B2K5M5"/>
<dbReference type="GeneID" id="98190601"/>
<dbReference type="KEGG" id="ypb:YPTS_3885"/>
<dbReference type="PATRIC" id="fig|502801.10.peg.3350"/>
<dbReference type="GO" id="GO:0022625">
    <property type="term" value="C:cytosolic large ribosomal subunit"/>
    <property type="evidence" value="ECO:0007669"/>
    <property type="project" value="TreeGrafter"/>
</dbReference>
<dbReference type="GO" id="GO:0019843">
    <property type="term" value="F:rRNA binding"/>
    <property type="evidence" value="ECO:0007669"/>
    <property type="project" value="UniProtKB-UniRule"/>
</dbReference>
<dbReference type="GO" id="GO:0003735">
    <property type="term" value="F:structural constituent of ribosome"/>
    <property type="evidence" value="ECO:0007669"/>
    <property type="project" value="InterPro"/>
</dbReference>
<dbReference type="GO" id="GO:0006412">
    <property type="term" value="P:translation"/>
    <property type="evidence" value="ECO:0007669"/>
    <property type="project" value="UniProtKB-UniRule"/>
</dbReference>
<dbReference type="CDD" id="cd00336">
    <property type="entry name" value="Ribosomal_L22"/>
    <property type="match status" value="1"/>
</dbReference>
<dbReference type="FunFam" id="3.90.470.10:FF:000001">
    <property type="entry name" value="50S ribosomal protein L22"/>
    <property type="match status" value="1"/>
</dbReference>
<dbReference type="Gene3D" id="3.90.470.10">
    <property type="entry name" value="Ribosomal protein L22/L17"/>
    <property type="match status" value="1"/>
</dbReference>
<dbReference type="HAMAP" id="MF_01331_B">
    <property type="entry name" value="Ribosomal_uL22_B"/>
    <property type="match status" value="1"/>
</dbReference>
<dbReference type="InterPro" id="IPR001063">
    <property type="entry name" value="Ribosomal_uL22"/>
</dbReference>
<dbReference type="InterPro" id="IPR005727">
    <property type="entry name" value="Ribosomal_uL22_bac/chlpt-type"/>
</dbReference>
<dbReference type="InterPro" id="IPR047867">
    <property type="entry name" value="Ribosomal_uL22_bac/org-type"/>
</dbReference>
<dbReference type="InterPro" id="IPR018260">
    <property type="entry name" value="Ribosomal_uL22_CS"/>
</dbReference>
<dbReference type="InterPro" id="IPR036394">
    <property type="entry name" value="Ribosomal_uL22_sf"/>
</dbReference>
<dbReference type="NCBIfam" id="TIGR01044">
    <property type="entry name" value="rplV_bact"/>
    <property type="match status" value="1"/>
</dbReference>
<dbReference type="PANTHER" id="PTHR13501">
    <property type="entry name" value="CHLOROPLAST 50S RIBOSOMAL PROTEIN L22-RELATED"/>
    <property type="match status" value="1"/>
</dbReference>
<dbReference type="PANTHER" id="PTHR13501:SF8">
    <property type="entry name" value="LARGE RIBOSOMAL SUBUNIT PROTEIN UL22M"/>
    <property type="match status" value="1"/>
</dbReference>
<dbReference type="Pfam" id="PF00237">
    <property type="entry name" value="Ribosomal_L22"/>
    <property type="match status" value="1"/>
</dbReference>
<dbReference type="SUPFAM" id="SSF54843">
    <property type="entry name" value="Ribosomal protein L22"/>
    <property type="match status" value="1"/>
</dbReference>
<dbReference type="PROSITE" id="PS00464">
    <property type="entry name" value="RIBOSOMAL_L22"/>
    <property type="match status" value="1"/>
</dbReference>
<gene>
    <name evidence="1" type="primary">rplV</name>
    <name type="ordered locus">YPTS_3885</name>
</gene>
<reference key="1">
    <citation type="submission" date="2008-04" db="EMBL/GenBank/DDBJ databases">
        <title>Complete sequence of Yersinia pseudotuberculosis PB1/+.</title>
        <authorList>
            <person name="Copeland A."/>
            <person name="Lucas S."/>
            <person name="Lapidus A."/>
            <person name="Glavina del Rio T."/>
            <person name="Dalin E."/>
            <person name="Tice H."/>
            <person name="Bruce D."/>
            <person name="Goodwin L."/>
            <person name="Pitluck S."/>
            <person name="Munk A.C."/>
            <person name="Brettin T."/>
            <person name="Detter J.C."/>
            <person name="Han C."/>
            <person name="Tapia R."/>
            <person name="Schmutz J."/>
            <person name="Larimer F."/>
            <person name="Land M."/>
            <person name="Hauser L."/>
            <person name="Challacombe J.F."/>
            <person name="Green L."/>
            <person name="Lindler L.E."/>
            <person name="Nikolich M.P."/>
            <person name="Richardson P."/>
        </authorList>
    </citation>
    <scope>NUCLEOTIDE SEQUENCE [LARGE SCALE GENOMIC DNA]</scope>
    <source>
        <strain>PB1/+</strain>
    </source>
</reference>
<protein>
    <recommendedName>
        <fullName evidence="1">Large ribosomal subunit protein uL22</fullName>
    </recommendedName>
    <alternativeName>
        <fullName evidence="2">50S ribosomal protein L22</fullName>
    </alternativeName>
</protein>
<proteinExistence type="inferred from homology"/>
<feature type="chain" id="PRO_1000142331" description="Large ribosomal subunit protein uL22">
    <location>
        <begin position="1"/>
        <end position="110"/>
    </location>
</feature>
<organism>
    <name type="scientific">Yersinia pseudotuberculosis serotype IB (strain PB1/+)</name>
    <dbReference type="NCBI Taxonomy" id="502801"/>
    <lineage>
        <taxon>Bacteria</taxon>
        <taxon>Pseudomonadati</taxon>
        <taxon>Pseudomonadota</taxon>
        <taxon>Gammaproteobacteria</taxon>
        <taxon>Enterobacterales</taxon>
        <taxon>Yersiniaceae</taxon>
        <taxon>Yersinia</taxon>
    </lineage>
</organism>
<keyword id="KW-0687">Ribonucleoprotein</keyword>
<keyword id="KW-0689">Ribosomal protein</keyword>
<keyword id="KW-0694">RNA-binding</keyword>
<keyword id="KW-0699">rRNA-binding</keyword>
<sequence length="110" mass="12186">METIAKHRHARSSAQKVRLVADLIRGKKVSQALETLTYTNKKAAGLVKKVLESAIANAEHNDGADIDDLKVTKIFVDEGPSMKRIMPRAKGRADRILKRTSHITVVVSDR</sequence>